<sequence>MSSSSSSSAVFPLDHLAAPSPTEQLCYVHCNCCDTILAVGVPCSSLFKTVTVRCGHCANLLSVNLRGLLLPAPAPAPANQLHFGPSLLSPTSPHGLLDEVAFQTPSLLMEQAASASLSSITGRSSSSCASNAPAMQMPPAKPVQQEPELPKNAPASANRPPEKRQRVPSAYNRFIKDEIQRIKAGNPDISHREAFSAAAKNWAHFPHIHFGLMPDQGFKKTFKPQDGSEDILLKDSLYAAAAAAAAAAANMGVTPF</sequence>
<feature type="chain" id="PRO_0000308697" description="Protein YABBY 4">
    <location>
        <begin position="1"/>
        <end position="256"/>
    </location>
</feature>
<feature type="zinc finger region" description="C4-type">
    <location>
        <begin position="30"/>
        <end position="57"/>
    </location>
</feature>
<feature type="region of interest" description="Disordered" evidence="1">
    <location>
        <begin position="127"/>
        <end position="168"/>
    </location>
</feature>
<comment type="function">
    <text evidence="3">Seems to be associated with phloem cell differentiation.</text>
</comment>
<comment type="subcellular location">
    <subcellularLocation>
        <location evidence="3">Nucleus</location>
    </subcellularLocation>
</comment>
<comment type="tissue specificity">
    <text evidence="2 3">Preferentially expressed in immature organs containing meristems and organ primordia. Expressed in phloem of developing vascular tissues of young seedling shoots. Expressed in the phloem of midvein vasculature of young leaves. Does not show polar expression pattern in leaf primordia.</text>
</comment>
<comment type="similarity">
    <text evidence="4">Belongs to the YABBY family.</text>
</comment>
<gene>
    <name type="primary">YAB4</name>
    <name type="ordered locus">Os02g0643200</name>
    <name type="ordered locus">LOC_Os02g42950</name>
    <name type="ORF">OJ1282_H11.2</name>
    <name type="ORF">OsJ_007454</name>
</gene>
<keyword id="KW-0221">Differentiation</keyword>
<keyword id="KW-0479">Metal-binding</keyword>
<keyword id="KW-0539">Nucleus</keyword>
<keyword id="KW-1185">Reference proteome</keyword>
<keyword id="KW-0862">Zinc</keyword>
<keyword id="KW-0863">Zinc-finger</keyword>
<accession>Q6H668</accession>
<accession>B7EZN7</accession>
<proteinExistence type="evidence at transcript level"/>
<protein>
    <recommendedName>
        <fullName>Protein YABBY 4</fullName>
    </recommendedName>
    <alternativeName>
        <fullName>OsYAB7</fullName>
    </alternativeName>
    <alternativeName>
        <fullName>OsYABBY4</fullName>
    </alternativeName>
</protein>
<name>YAB4_ORYSJ</name>
<reference key="1">
    <citation type="journal article" date="2007" name="Mol. Genet. Genomics">
        <title>Molecular characterization the YABBY gene family in Oryza sativa and expression analysis of OsYABBY1.</title>
        <authorList>
            <person name="Toriba T."/>
            <person name="Harada K."/>
            <person name="Takamura A."/>
            <person name="Nakamura H."/>
            <person name="Ichikawa H."/>
            <person name="Suzaki T."/>
            <person name="Hirano H.-Y."/>
        </authorList>
    </citation>
    <scope>NUCLEOTIDE SEQUENCE [MRNA]</scope>
    <scope>TISSUE SPECIFICITY</scope>
    <scope>GENE FAMILY</scope>
    <scope>NOMENCLATURE</scope>
    <source>
        <strain>cv. Nipponbare</strain>
    </source>
</reference>
<reference key="2">
    <citation type="journal article" date="2005" name="Nature">
        <title>The map-based sequence of the rice genome.</title>
        <authorList>
            <consortium name="International rice genome sequencing project (IRGSP)"/>
        </authorList>
    </citation>
    <scope>NUCLEOTIDE SEQUENCE [LARGE SCALE GENOMIC DNA]</scope>
    <source>
        <strain>cv. Nipponbare</strain>
    </source>
</reference>
<reference key="3">
    <citation type="journal article" date="2008" name="Nucleic Acids Res.">
        <title>The rice annotation project database (RAP-DB): 2008 update.</title>
        <authorList>
            <consortium name="The rice annotation project (RAP)"/>
        </authorList>
    </citation>
    <scope>GENOME REANNOTATION</scope>
    <source>
        <strain>cv. Nipponbare</strain>
    </source>
</reference>
<reference key="4">
    <citation type="journal article" date="2013" name="Rice">
        <title>Improvement of the Oryza sativa Nipponbare reference genome using next generation sequence and optical map data.</title>
        <authorList>
            <person name="Kawahara Y."/>
            <person name="de la Bastide M."/>
            <person name="Hamilton J.P."/>
            <person name="Kanamori H."/>
            <person name="McCombie W.R."/>
            <person name="Ouyang S."/>
            <person name="Schwartz D.C."/>
            <person name="Tanaka T."/>
            <person name="Wu J."/>
            <person name="Zhou S."/>
            <person name="Childs K.L."/>
            <person name="Davidson R.M."/>
            <person name="Lin H."/>
            <person name="Quesada-Ocampo L."/>
            <person name="Vaillancourt B."/>
            <person name="Sakai H."/>
            <person name="Lee S.S."/>
            <person name="Kim J."/>
            <person name="Numa H."/>
            <person name="Itoh T."/>
            <person name="Buell C.R."/>
            <person name="Matsumoto T."/>
        </authorList>
    </citation>
    <scope>GENOME REANNOTATION</scope>
    <source>
        <strain>cv. Nipponbare</strain>
    </source>
</reference>
<reference key="5">
    <citation type="journal article" date="2005" name="PLoS Biol.">
        <title>The genomes of Oryza sativa: a history of duplications.</title>
        <authorList>
            <person name="Yu J."/>
            <person name="Wang J."/>
            <person name="Lin W."/>
            <person name="Li S."/>
            <person name="Li H."/>
            <person name="Zhou J."/>
            <person name="Ni P."/>
            <person name="Dong W."/>
            <person name="Hu S."/>
            <person name="Zeng C."/>
            <person name="Zhang J."/>
            <person name="Zhang Y."/>
            <person name="Li R."/>
            <person name="Xu Z."/>
            <person name="Li S."/>
            <person name="Li X."/>
            <person name="Zheng H."/>
            <person name="Cong L."/>
            <person name="Lin L."/>
            <person name="Yin J."/>
            <person name="Geng J."/>
            <person name="Li G."/>
            <person name="Shi J."/>
            <person name="Liu J."/>
            <person name="Lv H."/>
            <person name="Li J."/>
            <person name="Wang J."/>
            <person name="Deng Y."/>
            <person name="Ran L."/>
            <person name="Shi X."/>
            <person name="Wang X."/>
            <person name="Wu Q."/>
            <person name="Li C."/>
            <person name="Ren X."/>
            <person name="Wang J."/>
            <person name="Wang X."/>
            <person name="Li D."/>
            <person name="Liu D."/>
            <person name="Zhang X."/>
            <person name="Ji Z."/>
            <person name="Zhao W."/>
            <person name="Sun Y."/>
            <person name="Zhang Z."/>
            <person name="Bao J."/>
            <person name="Han Y."/>
            <person name="Dong L."/>
            <person name="Ji J."/>
            <person name="Chen P."/>
            <person name="Wu S."/>
            <person name="Liu J."/>
            <person name="Xiao Y."/>
            <person name="Bu D."/>
            <person name="Tan J."/>
            <person name="Yang L."/>
            <person name="Ye C."/>
            <person name="Zhang J."/>
            <person name="Xu J."/>
            <person name="Zhou Y."/>
            <person name="Yu Y."/>
            <person name="Zhang B."/>
            <person name="Zhuang S."/>
            <person name="Wei H."/>
            <person name="Liu B."/>
            <person name="Lei M."/>
            <person name="Yu H."/>
            <person name="Li Y."/>
            <person name="Xu H."/>
            <person name="Wei S."/>
            <person name="He X."/>
            <person name="Fang L."/>
            <person name="Zhang Z."/>
            <person name="Zhang Y."/>
            <person name="Huang X."/>
            <person name="Su Z."/>
            <person name="Tong W."/>
            <person name="Li J."/>
            <person name="Tong Z."/>
            <person name="Li S."/>
            <person name="Ye J."/>
            <person name="Wang L."/>
            <person name="Fang L."/>
            <person name="Lei T."/>
            <person name="Chen C.-S."/>
            <person name="Chen H.-C."/>
            <person name="Xu Z."/>
            <person name="Li H."/>
            <person name="Huang H."/>
            <person name="Zhang F."/>
            <person name="Xu H."/>
            <person name="Li N."/>
            <person name="Zhao C."/>
            <person name="Li S."/>
            <person name="Dong L."/>
            <person name="Huang Y."/>
            <person name="Li L."/>
            <person name="Xi Y."/>
            <person name="Qi Q."/>
            <person name="Li W."/>
            <person name="Zhang B."/>
            <person name="Hu W."/>
            <person name="Zhang Y."/>
            <person name="Tian X."/>
            <person name="Jiao Y."/>
            <person name="Liang X."/>
            <person name="Jin J."/>
            <person name="Gao L."/>
            <person name="Zheng W."/>
            <person name="Hao B."/>
            <person name="Liu S.-M."/>
            <person name="Wang W."/>
            <person name="Yuan L."/>
            <person name="Cao M."/>
            <person name="McDermott J."/>
            <person name="Samudrala R."/>
            <person name="Wang J."/>
            <person name="Wong G.K.-S."/>
            <person name="Yang H."/>
        </authorList>
    </citation>
    <scope>NUCLEOTIDE SEQUENCE [LARGE SCALE GENOMIC DNA]</scope>
    <source>
        <strain>cv. Nipponbare</strain>
    </source>
</reference>
<reference key="6">
    <citation type="journal article" date="2003" name="Science">
        <title>Collection, mapping, and annotation of over 28,000 cDNA clones from japonica rice.</title>
        <authorList>
            <consortium name="The rice full-length cDNA consortium"/>
        </authorList>
    </citation>
    <scope>NUCLEOTIDE SEQUENCE [LARGE SCALE MRNA]</scope>
    <source>
        <strain>cv. Nipponbare</strain>
    </source>
</reference>
<reference key="7">
    <citation type="journal article" date="2007" name="Dev. Genes Evol.">
        <title>A rice YABBY gene, OsYABBY4, preferentially expresses in developing vascular tissue.</title>
        <authorList>
            <person name="Liu H.-L."/>
            <person name="Xu Y.-Y."/>
            <person name="Xu Z.-H."/>
            <person name="Chong K."/>
        </authorList>
    </citation>
    <scope>FUNCTION</scope>
    <scope>SUBCELLULAR LOCATION</scope>
    <scope>TISSUE SPECIFICITY</scope>
</reference>
<organism>
    <name type="scientific">Oryza sativa subsp. japonica</name>
    <name type="common">Rice</name>
    <dbReference type="NCBI Taxonomy" id="39947"/>
    <lineage>
        <taxon>Eukaryota</taxon>
        <taxon>Viridiplantae</taxon>
        <taxon>Streptophyta</taxon>
        <taxon>Embryophyta</taxon>
        <taxon>Tracheophyta</taxon>
        <taxon>Spermatophyta</taxon>
        <taxon>Magnoliopsida</taxon>
        <taxon>Liliopsida</taxon>
        <taxon>Poales</taxon>
        <taxon>Poaceae</taxon>
        <taxon>BOP clade</taxon>
        <taxon>Oryzoideae</taxon>
        <taxon>Oryzeae</taxon>
        <taxon>Oryzinae</taxon>
        <taxon>Oryza</taxon>
        <taxon>Oryza sativa</taxon>
    </lineage>
</organism>
<evidence type="ECO:0000256" key="1">
    <source>
        <dbReference type="SAM" id="MobiDB-lite"/>
    </source>
</evidence>
<evidence type="ECO:0000269" key="2">
    <source>
    </source>
</evidence>
<evidence type="ECO:0000269" key="3">
    <source>
    </source>
</evidence>
<evidence type="ECO:0000305" key="4"/>
<dbReference type="EMBL" id="AB274016">
    <property type="protein sequence ID" value="BAF45805.1"/>
    <property type="molecule type" value="mRNA"/>
</dbReference>
<dbReference type="EMBL" id="AP005291">
    <property type="protein sequence ID" value="BAD25781.1"/>
    <property type="molecule type" value="Genomic_DNA"/>
</dbReference>
<dbReference type="EMBL" id="AP008208">
    <property type="protein sequence ID" value="BAF09473.1"/>
    <property type="molecule type" value="Genomic_DNA"/>
</dbReference>
<dbReference type="EMBL" id="AP014958">
    <property type="protein sequence ID" value="BAS80002.1"/>
    <property type="molecule type" value="Genomic_DNA"/>
</dbReference>
<dbReference type="EMBL" id="CM000139">
    <property type="status" value="NOT_ANNOTATED_CDS"/>
    <property type="molecule type" value="Genomic_DNA"/>
</dbReference>
<dbReference type="EMBL" id="AK106784">
    <property type="protein sequence ID" value="BAG97834.1"/>
    <property type="molecule type" value="mRNA"/>
</dbReference>
<dbReference type="RefSeq" id="XP_015622736.1">
    <property type="nucleotide sequence ID" value="XM_015767250.1"/>
</dbReference>
<dbReference type="SMR" id="Q6H668"/>
<dbReference type="FunCoup" id="Q6H668">
    <property type="interactions" value="542"/>
</dbReference>
<dbReference type="STRING" id="39947.Q6H668"/>
<dbReference type="PaxDb" id="39947-Q6H668"/>
<dbReference type="EnsemblPlants" id="Os02t0643200-01">
    <property type="protein sequence ID" value="Os02t0643200-01"/>
    <property type="gene ID" value="Os02g0643200"/>
</dbReference>
<dbReference type="Gramene" id="Os02t0643200-01">
    <property type="protein sequence ID" value="Os02t0643200-01"/>
    <property type="gene ID" value="Os02g0643200"/>
</dbReference>
<dbReference type="KEGG" id="dosa:Os02g0643200"/>
<dbReference type="eggNOG" id="ENOG502QQ88">
    <property type="taxonomic scope" value="Eukaryota"/>
</dbReference>
<dbReference type="HOGENOM" id="CLU_071156_1_0_1"/>
<dbReference type="InParanoid" id="Q6H668"/>
<dbReference type="OMA" id="NMGFTPY"/>
<dbReference type="OrthoDB" id="667577at2759"/>
<dbReference type="Proteomes" id="UP000000763">
    <property type="component" value="Chromosome 2"/>
</dbReference>
<dbReference type="Proteomes" id="UP000007752">
    <property type="component" value="Chromosome 2"/>
</dbReference>
<dbReference type="Proteomes" id="UP000059680">
    <property type="component" value="Chromosome 2"/>
</dbReference>
<dbReference type="GO" id="GO:0005634">
    <property type="term" value="C:nucleus"/>
    <property type="evidence" value="ECO:0000318"/>
    <property type="project" value="GO_Central"/>
</dbReference>
<dbReference type="GO" id="GO:0008270">
    <property type="term" value="F:zinc ion binding"/>
    <property type="evidence" value="ECO:0007669"/>
    <property type="project" value="UniProtKB-KW"/>
</dbReference>
<dbReference type="GO" id="GO:0010158">
    <property type="term" value="P:abaxial cell fate specification"/>
    <property type="evidence" value="ECO:0000318"/>
    <property type="project" value="GO_Central"/>
</dbReference>
<dbReference type="GO" id="GO:0045165">
    <property type="term" value="P:cell fate commitment"/>
    <property type="evidence" value="ECO:0000318"/>
    <property type="project" value="GO_Central"/>
</dbReference>
<dbReference type="GO" id="GO:0010154">
    <property type="term" value="P:fruit development"/>
    <property type="evidence" value="ECO:0000318"/>
    <property type="project" value="GO_Central"/>
</dbReference>
<dbReference type="GO" id="GO:0009944">
    <property type="term" value="P:polarity specification of adaxial/abaxial axis"/>
    <property type="evidence" value="ECO:0000318"/>
    <property type="project" value="GO_Central"/>
</dbReference>
<dbReference type="GO" id="GO:2000024">
    <property type="term" value="P:regulation of leaf development"/>
    <property type="evidence" value="ECO:0000318"/>
    <property type="project" value="GO_Central"/>
</dbReference>
<dbReference type="GO" id="GO:1902183">
    <property type="term" value="P:regulation of shoot apical meristem development"/>
    <property type="evidence" value="ECO:0000318"/>
    <property type="project" value="GO_Central"/>
</dbReference>
<dbReference type="CDD" id="cd00084">
    <property type="entry name" value="HMG-box_SF"/>
    <property type="match status" value="1"/>
</dbReference>
<dbReference type="FunFam" id="1.10.30.10:FF:000047">
    <property type="entry name" value="Axial regulator YABBY"/>
    <property type="match status" value="1"/>
</dbReference>
<dbReference type="Gene3D" id="1.10.30.10">
    <property type="entry name" value="High mobility group box domain"/>
    <property type="match status" value="1"/>
</dbReference>
<dbReference type="InterPro" id="IPR036910">
    <property type="entry name" value="HMG_box_dom_sf"/>
</dbReference>
<dbReference type="InterPro" id="IPR006780">
    <property type="entry name" value="YABBY"/>
</dbReference>
<dbReference type="InterPro" id="IPR056775">
    <property type="entry name" value="YABBY_C"/>
</dbReference>
<dbReference type="InterPro" id="IPR056776">
    <property type="entry name" value="YABBY_N"/>
</dbReference>
<dbReference type="PANTHER" id="PTHR31675:SF46">
    <property type="entry name" value="PROTEIN YABBY 4"/>
    <property type="match status" value="1"/>
</dbReference>
<dbReference type="PANTHER" id="PTHR31675">
    <property type="entry name" value="PROTEIN YABBY 6-RELATED"/>
    <property type="match status" value="1"/>
</dbReference>
<dbReference type="Pfam" id="PF04690">
    <property type="entry name" value="YABBY"/>
    <property type="match status" value="1"/>
</dbReference>
<dbReference type="Pfam" id="PF24868">
    <property type="entry name" value="YABBY_N"/>
    <property type="match status" value="1"/>
</dbReference>
<dbReference type="SUPFAM" id="SSF47095">
    <property type="entry name" value="HMG-box"/>
    <property type="match status" value="1"/>
</dbReference>